<evidence type="ECO:0000255" key="1">
    <source>
        <dbReference type="HAMAP-Rule" id="MF_00192"/>
    </source>
</evidence>
<dbReference type="EC" id="2.7.7.6" evidence="1"/>
<dbReference type="EMBL" id="AE017261">
    <property type="protein sequence ID" value="AAT43128.1"/>
    <property type="molecule type" value="Genomic_DNA"/>
</dbReference>
<dbReference type="SMR" id="Q6L1M4"/>
<dbReference type="FunCoup" id="Q6L1M4">
    <property type="interactions" value="7"/>
</dbReference>
<dbReference type="STRING" id="263820.PTO0543"/>
<dbReference type="PaxDb" id="263820-PTO0543"/>
<dbReference type="KEGG" id="pto:PTO0543"/>
<dbReference type="PATRIC" id="fig|263820.9.peg.571"/>
<dbReference type="eggNOG" id="arCOG01268">
    <property type="taxonomic scope" value="Archaea"/>
</dbReference>
<dbReference type="HOGENOM" id="CLU_112527_5_0_2"/>
<dbReference type="InParanoid" id="Q6L1M4"/>
<dbReference type="Proteomes" id="UP000000438">
    <property type="component" value="Chromosome"/>
</dbReference>
<dbReference type="GO" id="GO:0005737">
    <property type="term" value="C:cytoplasm"/>
    <property type="evidence" value="ECO:0007669"/>
    <property type="project" value="UniProtKB-SubCell"/>
</dbReference>
<dbReference type="GO" id="GO:0000428">
    <property type="term" value="C:DNA-directed RNA polymerase complex"/>
    <property type="evidence" value="ECO:0007669"/>
    <property type="project" value="UniProtKB-KW"/>
</dbReference>
<dbReference type="GO" id="GO:0003677">
    <property type="term" value="F:DNA binding"/>
    <property type="evidence" value="ECO:0007669"/>
    <property type="project" value="UniProtKB-UniRule"/>
</dbReference>
<dbReference type="GO" id="GO:0003899">
    <property type="term" value="F:DNA-directed RNA polymerase activity"/>
    <property type="evidence" value="ECO:0007669"/>
    <property type="project" value="UniProtKB-UniRule"/>
</dbReference>
<dbReference type="GO" id="GO:0006360">
    <property type="term" value="P:transcription by RNA polymerase I"/>
    <property type="evidence" value="ECO:0007669"/>
    <property type="project" value="TreeGrafter"/>
</dbReference>
<dbReference type="GO" id="GO:0006366">
    <property type="term" value="P:transcription by RNA polymerase II"/>
    <property type="evidence" value="ECO:0007669"/>
    <property type="project" value="TreeGrafter"/>
</dbReference>
<dbReference type="GO" id="GO:0042797">
    <property type="term" value="P:tRNA transcription by RNA polymerase III"/>
    <property type="evidence" value="ECO:0007669"/>
    <property type="project" value="TreeGrafter"/>
</dbReference>
<dbReference type="Gene3D" id="3.90.940.10">
    <property type="match status" value="1"/>
</dbReference>
<dbReference type="HAMAP" id="MF_00192">
    <property type="entry name" value="RNApol_arch_Rpo6"/>
    <property type="match status" value="1"/>
</dbReference>
<dbReference type="InterPro" id="IPR020708">
    <property type="entry name" value="DNA-dir_RNA_polK_14-18kDa_CS"/>
</dbReference>
<dbReference type="InterPro" id="IPR006110">
    <property type="entry name" value="Pol_omega/Rpo6/RPB6"/>
</dbReference>
<dbReference type="InterPro" id="IPR036161">
    <property type="entry name" value="RPB6/omega-like_sf"/>
</dbReference>
<dbReference type="InterPro" id="IPR006111">
    <property type="entry name" value="Rpo6/Rpb6"/>
</dbReference>
<dbReference type="NCBIfam" id="NF002208">
    <property type="entry name" value="PRK01099.1-3"/>
    <property type="match status" value="1"/>
</dbReference>
<dbReference type="PANTHER" id="PTHR47227">
    <property type="entry name" value="DNA-DIRECTED RNA POLYMERASE SUBUNIT K"/>
    <property type="match status" value="1"/>
</dbReference>
<dbReference type="PANTHER" id="PTHR47227:SF5">
    <property type="entry name" value="DNA-DIRECTED RNA POLYMERASES I, II, AND III SUBUNIT RPABC2"/>
    <property type="match status" value="1"/>
</dbReference>
<dbReference type="Pfam" id="PF01192">
    <property type="entry name" value="RNA_pol_Rpb6"/>
    <property type="match status" value="1"/>
</dbReference>
<dbReference type="PIRSF" id="PIRSF000778">
    <property type="entry name" value="RpoK/RPB6"/>
    <property type="match status" value="1"/>
</dbReference>
<dbReference type="SMART" id="SM01409">
    <property type="entry name" value="RNA_pol_Rpb6"/>
    <property type="match status" value="1"/>
</dbReference>
<dbReference type="SUPFAM" id="SSF63562">
    <property type="entry name" value="RPB6/omega subunit-like"/>
    <property type="match status" value="1"/>
</dbReference>
<dbReference type="PROSITE" id="PS01111">
    <property type="entry name" value="RNA_POL_K_14KD"/>
    <property type="match status" value="1"/>
</dbReference>
<protein>
    <recommendedName>
        <fullName evidence="1">DNA-directed RNA polymerase subunit Rpo6</fullName>
        <ecNumber evidence="1">2.7.7.6</ecNumber>
    </recommendedName>
    <alternativeName>
        <fullName evidence="1">DNA-directed RNA polymerase subunit K</fullName>
    </alternativeName>
</protein>
<name>RPO6_PICTO</name>
<reference key="1">
    <citation type="journal article" date="2004" name="Proc. Natl. Acad. Sci. U.S.A.">
        <title>Genome sequence of Picrophilus torridus and its implications for life around pH 0.</title>
        <authorList>
            <person name="Fuetterer O."/>
            <person name="Angelov A."/>
            <person name="Liesegang H."/>
            <person name="Gottschalk G."/>
            <person name="Schleper C."/>
            <person name="Schepers B."/>
            <person name="Dock C."/>
            <person name="Antranikian G."/>
            <person name="Liebl W."/>
        </authorList>
    </citation>
    <scope>NUCLEOTIDE SEQUENCE [LARGE SCALE GENOMIC DNA]</scope>
    <source>
        <strain>ATCC 700027 / DSM 9790 / JCM 10055 / NBRC 100828 / KAW 2/3</strain>
    </source>
</reference>
<gene>
    <name evidence="1" type="primary">rpo6</name>
    <name evidence="1" type="synonym">rpoK</name>
    <name type="ordered locus">PTO0543</name>
</gene>
<feature type="chain" id="PRO_0000133816" description="DNA-directed RNA polymerase subunit Rpo6">
    <location>
        <begin position="1"/>
        <end position="60"/>
    </location>
</feature>
<proteinExistence type="inferred from homology"/>
<organism>
    <name type="scientific">Picrophilus torridus (strain ATCC 700027 / DSM 9790 / JCM 10055 / NBRC 100828 / KAW 2/3)</name>
    <dbReference type="NCBI Taxonomy" id="1122961"/>
    <lineage>
        <taxon>Archaea</taxon>
        <taxon>Methanobacteriati</taxon>
        <taxon>Thermoplasmatota</taxon>
        <taxon>Thermoplasmata</taxon>
        <taxon>Thermoplasmatales</taxon>
        <taxon>Picrophilaceae</taxon>
        <taxon>Picrophilus</taxon>
    </lineage>
</organism>
<comment type="function">
    <text evidence="1">DNA-dependent RNA polymerase (RNAP) catalyzes the transcription of DNA into RNA using the four ribonucleoside triphosphates as substrates.</text>
</comment>
<comment type="catalytic activity">
    <reaction evidence="1">
        <text>RNA(n) + a ribonucleoside 5'-triphosphate = RNA(n+1) + diphosphate</text>
        <dbReference type="Rhea" id="RHEA:21248"/>
        <dbReference type="Rhea" id="RHEA-COMP:14527"/>
        <dbReference type="Rhea" id="RHEA-COMP:17342"/>
        <dbReference type="ChEBI" id="CHEBI:33019"/>
        <dbReference type="ChEBI" id="CHEBI:61557"/>
        <dbReference type="ChEBI" id="CHEBI:140395"/>
        <dbReference type="EC" id="2.7.7.6"/>
    </reaction>
</comment>
<comment type="subunit">
    <text evidence="1">Part of the RNA polymerase complex.</text>
</comment>
<comment type="subcellular location">
    <subcellularLocation>
        <location evidence="1">Cytoplasm</location>
    </subcellularLocation>
</comment>
<comment type="similarity">
    <text evidence="1">Belongs to the archaeal Rpo6/eukaryotic RPB6 RNA polymerase subunit family.</text>
</comment>
<accession>Q6L1M4</accession>
<sequence>MIFMILTKFEKARIIGARALQIAMGAPVIIDISPDIIDPIDIAMIEFENNVIPITIKRNQ</sequence>
<keyword id="KW-0963">Cytoplasm</keyword>
<keyword id="KW-0240">DNA-directed RNA polymerase</keyword>
<keyword id="KW-0548">Nucleotidyltransferase</keyword>
<keyword id="KW-0804">Transcription</keyword>
<keyword id="KW-0808">Transferase</keyword>